<name>EFEO_YERPE</name>
<accession>Q0WFT9</accession>
<accession>Q74V01</accession>
<accession>Q8D0B8</accession>
<sequence length="376" mass="41353">MSIWFFRRTALHAALLSLPVFAISAQAADIQQVKITVNDKQCEPMALTVPAGKTQFIVHNVSQKGLEWEILKGVMVVEERENIAPGFTQKMTANLEPGEYDMTCGLLSNPKGKLTVTVAAGEQAPVKPDAMALVGPIAEYKVYVTQEVAQLVSQTKAFTDAVKAGDLALARKLYAPTRQHYERIEPIAELFSDLDGSIDAREDDFEQKSADPKFTGFHRLEKILFGDNTTKGADKFADLLYQDTLELQKRIAGLTFAPNKVVGGAAGLIEEVAASKISGEEDRYSRTDLWDFQANVDGAQKIVNLLRPLLEKADKPLLQKIDANFNTVDSVLAKYRTKEGYESYEKLTDADRNAMKGPITALAEDLAQLRGVLGLD</sequence>
<organism>
    <name type="scientific">Yersinia pestis</name>
    <dbReference type="NCBI Taxonomy" id="632"/>
    <lineage>
        <taxon>Bacteria</taxon>
        <taxon>Pseudomonadati</taxon>
        <taxon>Pseudomonadota</taxon>
        <taxon>Gammaproteobacteria</taxon>
        <taxon>Enterobacterales</taxon>
        <taxon>Yersiniaceae</taxon>
        <taxon>Yersinia</taxon>
    </lineage>
</organism>
<reference key="1">
    <citation type="journal article" date="2001" name="Nature">
        <title>Genome sequence of Yersinia pestis, the causative agent of plague.</title>
        <authorList>
            <person name="Parkhill J."/>
            <person name="Wren B.W."/>
            <person name="Thomson N.R."/>
            <person name="Titball R.W."/>
            <person name="Holden M.T.G."/>
            <person name="Prentice M.B."/>
            <person name="Sebaihia M."/>
            <person name="James K.D."/>
            <person name="Churcher C.M."/>
            <person name="Mungall K.L."/>
            <person name="Baker S."/>
            <person name="Basham D."/>
            <person name="Bentley S.D."/>
            <person name="Brooks K."/>
            <person name="Cerdeno-Tarraga A.-M."/>
            <person name="Chillingworth T."/>
            <person name="Cronin A."/>
            <person name="Davies R.M."/>
            <person name="Davis P."/>
            <person name="Dougan G."/>
            <person name="Feltwell T."/>
            <person name="Hamlin N."/>
            <person name="Holroyd S."/>
            <person name="Jagels K."/>
            <person name="Karlyshev A.V."/>
            <person name="Leather S."/>
            <person name="Moule S."/>
            <person name="Oyston P.C.F."/>
            <person name="Quail M.A."/>
            <person name="Rutherford K.M."/>
            <person name="Simmonds M."/>
            <person name="Skelton J."/>
            <person name="Stevens K."/>
            <person name="Whitehead S."/>
            <person name="Barrell B.G."/>
        </authorList>
    </citation>
    <scope>NUCLEOTIDE SEQUENCE [LARGE SCALE GENOMIC DNA]</scope>
    <source>
        <strain>CO-92 / Biovar Orientalis</strain>
    </source>
</reference>
<reference key="2">
    <citation type="journal article" date="2002" name="J. Bacteriol.">
        <title>Genome sequence of Yersinia pestis KIM.</title>
        <authorList>
            <person name="Deng W."/>
            <person name="Burland V."/>
            <person name="Plunkett G. III"/>
            <person name="Boutin A."/>
            <person name="Mayhew G.F."/>
            <person name="Liss P."/>
            <person name="Perna N.T."/>
            <person name="Rose D.J."/>
            <person name="Mau B."/>
            <person name="Zhou S."/>
            <person name="Schwartz D.C."/>
            <person name="Fetherston J.D."/>
            <person name="Lindler L.E."/>
            <person name="Brubaker R.R."/>
            <person name="Plano G.V."/>
            <person name="Straley S.C."/>
            <person name="McDonough K.A."/>
            <person name="Nilles M.L."/>
            <person name="Matson J.S."/>
            <person name="Blattner F.R."/>
            <person name="Perry R.D."/>
        </authorList>
    </citation>
    <scope>NUCLEOTIDE SEQUENCE [LARGE SCALE GENOMIC DNA]</scope>
    <source>
        <strain>KIM10+ / Biovar Mediaevalis</strain>
    </source>
</reference>
<reference key="3">
    <citation type="journal article" date="2004" name="DNA Res.">
        <title>Complete genome sequence of Yersinia pestis strain 91001, an isolate avirulent to humans.</title>
        <authorList>
            <person name="Song Y."/>
            <person name="Tong Z."/>
            <person name="Wang J."/>
            <person name="Wang L."/>
            <person name="Guo Z."/>
            <person name="Han Y."/>
            <person name="Zhang J."/>
            <person name="Pei D."/>
            <person name="Zhou D."/>
            <person name="Qin H."/>
            <person name="Pang X."/>
            <person name="Han Y."/>
            <person name="Zhai J."/>
            <person name="Li M."/>
            <person name="Cui B."/>
            <person name="Qi Z."/>
            <person name="Jin L."/>
            <person name="Dai R."/>
            <person name="Chen F."/>
            <person name="Li S."/>
            <person name="Ye C."/>
            <person name="Du Z."/>
            <person name="Lin W."/>
            <person name="Wang J."/>
            <person name="Yu J."/>
            <person name="Yang H."/>
            <person name="Wang J."/>
            <person name="Huang P."/>
            <person name="Yang R."/>
        </authorList>
    </citation>
    <scope>NUCLEOTIDE SEQUENCE [LARGE SCALE GENOMIC DNA]</scope>
    <source>
        <strain>91001 / Biovar Mediaevalis</strain>
    </source>
</reference>
<feature type="signal peptide" evidence="2">
    <location>
        <begin position="1"/>
        <end position="27"/>
    </location>
</feature>
<feature type="chain" id="PRO_0000278561" description="Iron uptake system component EfeO">
    <location>
        <begin position="28"/>
        <end position="376"/>
    </location>
</feature>
<feature type="helix" evidence="4">
    <location>
        <begin position="317"/>
        <end position="333"/>
    </location>
</feature>
<feature type="helix" evidence="4">
    <location>
        <begin position="344"/>
        <end position="346"/>
    </location>
</feature>
<feature type="helix" evidence="4">
    <location>
        <begin position="349"/>
        <end position="372"/>
    </location>
</feature>
<gene>
    <name type="primary">efeO</name>
    <name type="ordered locus">YPO1855</name>
    <name type="ordered locus">y2451</name>
    <name type="ordered locus">YP_1538</name>
</gene>
<keyword id="KW-0002">3D-structure</keyword>
<keyword id="KW-0574">Periplasm</keyword>
<keyword id="KW-1185">Reference proteome</keyword>
<keyword id="KW-0732">Signal</keyword>
<proteinExistence type="evidence at protein level"/>
<comment type="function">
    <text evidence="1">Involved in Fe(2+) uptake. Could be an iron-binding and/or electron-transfer component (By similarity).</text>
</comment>
<comment type="subunit">
    <text evidence="1">Monomer. Part of a ferrous iron transporter composed of EfeU, EfeO and EfeB (By similarity).</text>
</comment>
<comment type="subcellular location">
    <subcellularLocation>
        <location evidence="1">Periplasm</location>
    </subcellularLocation>
</comment>
<comment type="similarity">
    <text evidence="3">Belongs to the EfeM/EfeO family.</text>
</comment>
<comment type="sequence caution" evidence="3">
    <conflict type="erroneous initiation">
        <sequence resource="EMBL-CDS" id="AAM86008"/>
    </conflict>
    <text>Extended N-terminus.</text>
</comment>
<comment type="sequence caution" evidence="3">
    <conflict type="erroneous initiation">
        <sequence resource="EMBL-CDS" id="AAS61773"/>
    </conflict>
    <text>Extended N-terminus.</text>
</comment>
<dbReference type="EMBL" id="AL590842">
    <property type="protein sequence ID" value="CAL20495.1"/>
    <property type="molecule type" value="Genomic_DNA"/>
</dbReference>
<dbReference type="EMBL" id="AE009952">
    <property type="protein sequence ID" value="AAM86008.1"/>
    <property type="status" value="ALT_INIT"/>
    <property type="molecule type" value="Genomic_DNA"/>
</dbReference>
<dbReference type="EMBL" id="AE017042">
    <property type="protein sequence ID" value="AAS61773.1"/>
    <property type="status" value="ALT_INIT"/>
    <property type="molecule type" value="Genomic_DNA"/>
</dbReference>
<dbReference type="PIR" id="AD0226">
    <property type="entry name" value="AD0226"/>
</dbReference>
<dbReference type="RefSeq" id="WP_002211166.1">
    <property type="nucleotide sequence ID" value="NZ_WUCM01000005.1"/>
</dbReference>
<dbReference type="RefSeq" id="YP_002346849.1">
    <property type="nucleotide sequence ID" value="NC_003143.1"/>
</dbReference>
<dbReference type="PDB" id="5TW9">
    <property type="method" value="X-ray"/>
    <property type="resolution" value="1.50 A"/>
    <property type="chains" value="A/B/C/D/E/F=314-376"/>
</dbReference>
<dbReference type="PDBsum" id="5TW9"/>
<dbReference type="SMR" id="Q0WFT9"/>
<dbReference type="STRING" id="214092.YPO1855"/>
<dbReference type="PaxDb" id="214092-YPO1855"/>
<dbReference type="DNASU" id="1147398"/>
<dbReference type="EnsemblBacteria" id="AAS61773">
    <property type="protein sequence ID" value="AAS61773"/>
    <property type="gene ID" value="YP_1538"/>
</dbReference>
<dbReference type="GeneID" id="57976726"/>
<dbReference type="KEGG" id="ype:YPO1855"/>
<dbReference type="KEGG" id="ypk:y2451"/>
<dbReference type="KEGG" id="ypm:YP_1538"/>
<dbReference type="PATRIC" id="fig|214092.21.peg.2220"/>
<dbReference type="eggNOG" id="COG2822">
    <property type="taxonomic scope" value="Bacteria"/>
</dbReference>
<dbReference type="HOGENOM" id="CLU_050342_2_1_6"/>
<dbReference type="OMA" id="WTGWHRL"/>
<dbReference type="OrthoDB" id="7348379at2"/>
<dbReference type="Proteomes" id="UP000000815">
    <property type="component" value="Chromosome"/>
</dbReference>
<dbReference type="Proteomes" id="UP000001019">
    <property type="component" value="Chromosome"/>
</dbReference>
<dbReference type="Proteomes" id="UP000002490">
    <property type="component" value="Chromosome"/>
</dbReference>
<dbReference type="GO" id="GO:0042597">
    <property type="term" value="C:periplasmic space"/>
    <property type="evidence" value="ECO:0007669"/>
    <property type="project" value="UniProtKB-SubCell"/>
</dbReference>
<dbReference type="CDD" id="cd04203">
    <property type="entry name" value="Cupredoxin_like_3"/>
    <property type="match status" value="1"/>
</dbReference>
<dbReference type="CDD" id="cd14656">
    <property type="entry name" value="Imelysin-like_EfeO"/>
    <property type="match status" value="1"/>
</dbReference>
<dbReference type="Gene3D" id="2.60.40.420">
    <property type="entry name" value="Cupredoxins - blue copper proteins"/>
    <property type="match status" value="1"/>
</dbReference>
<dbReference type="Gene3D" id="1.20.1420.20">
    <property type="entry name" value="M75 peptidase, HXXE motif"/>
    <property type="match status" value="1"/>
</dbReference>
<dbReference type="InterPro" id="IPR008972">
    <property type="entry name" value="Cupredoxin"/>
</dbReference>
<dbReference type="InterPro" id="IPR050894">
    <property type="entry name" value="EfeM/EfeO_iron_uptake"/>
</dbReference>
<dbReference type="InterPro" id="IPR028096">
    <property type="entry name" value="EfeO_Cupredoxin"/>
</dbReference>
<dbReference type="InterPro" id="IPR018976">
    <property type="entry name" value="Imelysin-like"/>
</dbReference>
<dbReference type="InterPro" id="IPR034981">
    <property type="entry name" value="Imelysin-like_EfeO/Algp7"/>
</dbReference>
<dbReference type="InterPro" id="IPR038352">
    <property type="entry name" value="Imelysin_sf"/>
</dbReference>
<dbReference type="InterPro" id="IPR053377">
    <property type="entry name" value="Iron_uptake_EfeM/EfeO"/>
</dbReference>
<dbReference type="NCBIfam" id="NF041757">
    <property type="entry name" value="EfeO"/>
    <property type="match status" value="1"/>
</dbReference>
<dbReference type="NCBIfam" id="NF007697">
    <property type="entry name" value="PRK10378.1"/>
    <property type="match status" value="1"/>
</dbReference>
<dbReference type="PANTHER" id="PTHR39192">
    <property type="entry name" value="IRON UPTAKE SYSTEM COMPONENT EFEO"/>
    <property type="match status" value="1"/>
</dbReference>
<dbReference type="PANTHER" id="PTHR39192:SF1">
    <property type="entry name" value="IRON UPTAKE SYSTEM COMPONENT EFEO"/>
    <property type="match status" value="1"/>
</dbReference>
<dbReference type="Pfam" id="PF13473">
    <property type="entry name" value="Cupredoxin_1"/>
    <property type="match status" value="1"/>
</dbReference>
<dbReference type="Pfam" id="PF09375">
    <property type="entry name" value="Peptidase_M75"/>
    <property type="match status" value="1"/>
</dbReference>
<dbReference type="SUPFAM" id="SSF49503">
    <property type="entry name" value="Cupredoxins"/>
    <property type="match status" value="1"/>
</dbReference>
<evidence type="ECO:0000250" key="1"/>
<evidence type="ECO:0000255" key="2"/>
<evidence type="ECO:0000305" key="3"/>
<evidence type="ECO:0007829" key="4">
    <source>
        <dbReference type="PDB" id="5TW9"/>
    </source>
</evidence>
<protein>
    <recommendedName>
        <fullName>Iron uptake system component EfeO</fullName>
    </recommendedName>
</protein>